<reference key="1">
    <citation type="journal article" date="2009" name="Proc. Natl. Acad. Sci. U.S.A.">
        <title>Biogeography of the Sulfolobus islandicus pan-genome.</title>
        <authorList>
            <person name="Reno M.L."/>
            <person name="Held N.L."/>
            <person name="Fields C.J."/>
            <person name="Burke P.V."/>
            <person name="Whitaker R.J."/>
        </authorList>
    </citation>
    <scope>NUCLEOTIDE SEQUENCE [LARGE SCALE GENOMIC DNA]</scope>
    <source>
        <strain>Y.N.15.51 / Yellowstone #2</strain>
    </source>
</reference>
<feature type="chain" id="PRO_1000205286" description="UPF0148 protein YN1551_1488">
    <location>
        <begin position="1"/>
        <end position="118"/>
    </location>
</feature>
<evidence type="ECO:0000255" key="1">
    <source>
        <dbReference type="HAMAP-Rule" id="MF_00343"/>
    </source>
</evidence>
<name>Y1488_SACI1</name>
<comment type="similarity">
    <text evidence="1">Belongs to the UPF0148 family.</text>
</comment>
<proteinExistence type="inferred from homology"/>
<sequence length="118" mass="13445">MTNESEVGVKKAAELLRQGATMLEEACPICKMPLFKLKNGDVVCPVHGKVYIVKSDDEEKIVKRNLQLDEIESILIDGLYLSAKKMKEDPLDSERIIQIIRYLDALERLRKIKINSSE</sequence>
<gene>
    <name type="ordered locus">YN1551_1488</name>
</gene>
<accession>C3NHG8</accession>
<organism>
    <name type="scientific">Saccharolobus islandicus (strain Y.N.15.51 / Yellowstone #2)</name>
    <name type="common">Sulfolobus islandicus</name>
    <dbReference type="NCBI Taxonomy" id="419942"/>
    <lineage>
        <taxon>Archaea</taxon>
        <taxon>Thermoproteota</taxon>
        <taxon>Thermoprotei</taxon>
        <taxon>Sulfolobales</taxon>
        <taxon>Sulfolobaceae</taxon>
        <taxon>Saccharolobus</taxon>
    </lineage>
</organism>
<dbReference type="EMBL" id="CP001404">
    <property type="protein sequence ID" value="ACP48578.1"/>
    <property type="molecule type" value="Genomic_DNA"/>
</dbReference>
<dbReference type="RefSeq" id="WP_010923073.1">
    <property type="nucleotide sequence ID" value="NC_012623.1"/>
</dbReference>
<dbReference type="SMR" id="C3NHG8"/>
<dbReference type="KEGG" id="sin:YN1551_1488"/>
<dbReference type="HOGENOM" id="CLU_142653_1_0_2"/>
<dbReference type="Proteomes" id="UP000006818">
    <property type="component" value="Chromosome"/>
</dbReference>
<dbReference type="HAMAP" id="MF_00343">
    <property type="entry name" value="UPF0148"/>
    <property type="match status" value="1"/>
</dbReference>
<dbReference type="InterPro" id="IPR009563">
    <property type="entry name" value="SSSCA1"/>
</dbReference>
<dbReference type="InterPro" id="IPR022954">
    <property type="entry name" value="UPF0148"/>
</dbReference>
<dbReference type="NCBIfam" id="NF001644">
    <property type="entry name" value="PRK00420.1-1"/>
    <property type="match status" value="1"/>
</dbReference>
<dbReference type="NCBIfam" id="NF001647">
    <property type="entry name" value="PRK00420.1-4"/>
    <property type="match status" value="1"/>
</dbReference>
<dbReference type="Pfam" id="PF06677">
    <property type="entry name" value="Auto_anti-p27"/>
    <property type="match status" value="1"/>
</dbReference>
<protein>
    <recommendedName>
        <fullName evidence="1">UPF0148 protein YN1551_1488</fullName>
    </recommendedName>
</protein>